<accession>Q8SX68</accession>
<accession>A0A0B4LFS3</accession>
<accession>Q9V8D0</accession>
<reference key="1">
    <citation type="journal article" date="2000" name="Science">
        <title>The genome sequence of Drosophila melanogaster.</title>
        <authorList>
            <person name="Adams M.D."/>
            <person name="Celniker S.E."/>
            <person name="Holt R.A."/>
            <person name="Evans C.A."/>
            <person name="Gocayne J.D."/>
            <person name="Amanatides P.G."/>
            <person name="Scherer S.E."/>
            <person name="Li P.W."/>
            <person name="Hoskins R.A."/>
            <person name="Galle R.F."/>
            <person name="George R.A."/>
            <person name="Lewis S.E."/>
            <person name="Richards S."/>
            <person name="Ashburner M."/>
            <person name="Henderson S.N."/>
            <person name="Sutton G.G."/>
            <person name="Wortman J.R."/>
            <person name="Yandell M.D."/>
            <person name="Zhang Q."/>
            <person name="Chen L.X."/>
            <person name="Brandon R.C."/>
            <person name="Rogers Y.-H.C."/>
            <person name="Blazej R.G."/>
            <person name="Champe M."/>
            <person name="Pfeiffer B.D."/>
            <person name="Wan K.H."/>
            <person name="Doyle C."/>
            <person name="Baxter E.G."/>
            <person name="Helt G."/>
            <person name="Nelson C.R."/>
            <person name="Miklos G.L.G."/>
            <person name="Abril J.F."/>
            <person name="Agbayani A."/>
            <person name="An H.-J."/>
            <person name="Andrews-Pfannkoch C."/>
            <person name="Baldwin D."/>
            <person name="Ballew R.M."/>
            <person name="Basu A."/>
            <person name="Baxendale J."/>
            <person name="Bayraktaroglu L."/>
            <person name="Beasley E.M."/>
            <person name="Beeson K.Y."/>
            <person name="Benos P.V."/>
            <person name="Berman B.P."/>
            <person name="Bhandari D."/>
            <person name="Bolshakov S."/>
            <person name="Borkova D."/>
            <person name="Botchan M.R."/>
            <person name="Bouck J."/>
            <person name="Brokstein P."/>
            <person name="Brottier P."/>
            <person name="Burtis K.C."/>
            <person name="Busam D.A."/>
            <person name="Butler H."/>
            <person name="Cadieu E."/>
            <person name="Center A."/>
            <person name="Chandra I."/>
            <person name="Cherry J.M."/>
            <person name="Cawley S."/>
            <person name="Dahlke C."/>
            <person name="Davenport L.B."/>
            <person name="Davies P."/>
            <person name="de Pablos B."/>
            <person name="Delcher A."/>
            <person name="Deng Z."/>
            <person name="Mays A.D."/>
            <person name="Dew I."/>
            <person name="Dietz S.M."/>
            <person name="Dodson K."/>
            <person name="Doup L.E."/>
            <person name="Downes M."/>
            <person name="Dugan-Rocha S."/>
            <person name="Dunkov B.C."/>
            <person name="Dunn P."/>
            <person name="Durbin K.J."/>
            <person name="Evangelista C.C."/>
            <person name="Ferraz C."/>
            <person name="Ferriera S."/>
            <person name="Fleischmann W."/>
            <person name="Fosler C."/>
            <person name="Gabrielian A.E."/>
            <person name="Garg N.S."/>
            <person name="Gelbart W.M."/>
            <person name="Glasser K."/>
            <person name="Glodek A."/>
            <person name="Gong F."/>
            <person name="Gorrell J.H."/>
            <person name="Gu Z."/>
            <person name="Guan P."/>
            <person name="Harris M."/>
            <person name="Harris N.L."/>
            <person name="Harvey D.A."/>
            <person name="Heiman T.J."/>
            <person name="Hernandez J.R."/>
            <person name="Houck J."/>
            <person name="Hostin D."/>
            <person name="Houston K.A."/>
            <person name="Howland T.J."/>
            <person name="Wei M.-H."/>
            <person name="Ibegwam C."/>
            <person name="Jalali M."/>
            <person name="Kalush F."/>
            <person name="Karpen G.H."/>
            <person name="Ke Z."/>
            <person name="Kennison J.A."/>
            <person name="Ketchum K.A."/>
            <person name="Kimmel B.E."/>
            <person name="Kodira C.D."/>
            <person name="Kraft C.L."/>
            <person name="Kravitz S."/>
            <person name="Kulp D."/>
            <person name="Lai Z."/>
            <person name="Lasko P."/>
            <person name="Lei Y."/>
            <person name="Levitsky A.A."/>
            <person name="Li J.H."/>
            <person name="Li Z."/>
            <person name="Liang Y."/>
            <person name="Lin X."/>
            <person name="Liu X."/>
            <person name="Mattei B."/>
            <person name="McIntosh T.C."/>
            <person name="McLeod M.P."/>
            <person name="McPherson D."/>
            <person name="Merkulov G."/>
            <person name="Milshina N.V."/>
            <person name="Mobarry C."/>
            <person name="Morris J."/>
            <person name="Moshrefi A."/>
            <person name="Mount S.M."/>
            <person name="Moy M."/>
            <person name="Murphy B."/>
            <person name="Murphy L."/>
            <person name="Muzny D.M."/>
            <person name="Nelson D.L."/>
            <person name="Nelson D.R."/>
            <person name="Nelson K.A."/>
            <person name="Nixon K."/>
            <person name="Nusskern D.R."/>
            <person name="Pacleb J.M."/>
            <person name="Palazzolo M."/>
            <person name="Pittman G.S."/>
            <person name="Pan S."/>
            <person name="Pollard J."/>
            <person name="Puri V."/>
            <person name="Reese M.G."/>
            <person name="Reinert K."/>
            <person name="Remington K."/>
            <person name="Saunders R.D.C."/>
            <person name="Scheeler F."/>
            <person name="Shen H."/>
            <person name="Shue B.C."/>
            <person name="Siden-Kiamos I."/>
            <person name="Simpson M."/>
            <person name="Skupski M.P."/>
            <person name="Smith T.J."/>
            <person name="Spier E."/>
            <person name="Spradling A.C."/>
            <person name="Stapleton M."/>
            <person name="Strong R."/>
            <person name="Sun E."/>
            <person name="Svirskas R."/>
            <person name="Tector C."/>
            <person name="Turner R."/>
            <person name="Venter E."/>
            <person name="Wang A.H."/>
            <person name="Wang X."/>
            <person name="Wang Z.-Y."/>
            <person name="Wassarman D.A."/>
            <person name="Weinstock G.M."/>
            <person name="Weissenbach J."/>
            <person name="Williams S.M."/>
            <person name="Woodage T."/>
            <person name="Worley K.C."/>
            <person name="Wu D."/>
            <person name="Yang S."/>
            <person name="Yao Q.A."/>
            <person name="Ye J."/>
            <person name="Yeh R.-F."/>
            <person name="Zaveri J.S."/>
            <person name="Zhan M."/>
            <person name="Zhang G."/>
            <person name="Zhao Q."/>
            <person name="Zheng L."/>
            <person name="Zheng X.H."/>
            <person name="Zhong F.N."/>
            <person name="Zhong W."/>
            <person name="Zhou X."/>
            <person name="Zhu S.C."/>
            <person name="Zhu X."/>
            <person name="Smith H.O."/>
            <person name="Gibbs R.A."/>
            <person name="Myers E.W."/>
            <person name="Rubin G.M."/>
            <person name="Venter J.C."/>
        </authorList>
    </citation>
    <scope>NUCLEOTIDE SEQUENCE [LARGE SCALE GENOMIC DNA]</scope>
    <source>
        <strain>Berkeley</strain>
    </source>
</reference>
<reference key="2">
    <citation type="journal article" date="2002" name="Genome Biol.">
        <title>Annotation of the Drosophila melanogaster euchromatic genome: a systematic review.</title>
        <authorList>
            <person name="Misra S."/>
            <person name="Crosby M.A."/>
            <person name="Mungall C.J."/>
            <person name="Matthews B.B."/>
            <person name="Campbell K.S."/>
            <person name="Hradecky P."/>
            <person name="Huang Y."/>
            <person name="Kaminker J.S."/>
            <person name="Millburn G.H."/>
            <person name="Prochnik S.E."/>
            <person name="Smith C.D."/>
            <person name="Tupy J.L."/>
            <person name="Whitfield E.J."/>
            <person name="Bayraktaroglu L."/>
            <person name="Berman B.P."/>
            <person name="Bettencourt B.R."/>
            <person name="Celniker S.E."/>
            <person name="de Grey A.D.N.J."/>
            <person name="Drysdale R.A."/>
            <person name="Harris N.L."/>
            <person name="Richter J."/>
            <person name="Russo S."/>
            <person name="Schroeder A.J."/>
            <person name="Shu S.Q."/>
            <person name="Stapleton M."/>
            <person name="Yamada C."/>
            <person name="Ashburner M."/>
            <person name="Gelbart W.M."/>
            <person name="Rubin G.M."/>
            <person name="Lewis S.E."/>
        </authorList>
    </citation>
    <scope>GENOME REANNOTATION</scope>
    <source>
        <strain>Berkeley</strain>
    </source>
</reference>
<reference key="3">
    <citation type="journal article" date="2002" name="Genome Biol.">
        <title>A Drosophila full-length cDNA resource.</title>
        <authorList>
            <person name="Stapleton M."/>
            <person name="Carlson J.W."/>
            <person name="Brokstein P."/>
            <person name="Yu C."/>
            <person name="Champe M."/>
            <person name="George R.A."/>
            <person name="Guarin H."/>
            <person name="Kronmiller B."/>
            <person name="Pacleb J.M."/>
            <person name="Park S."/>
            <person name="Wan K.H."/>
            <person name="Rubin G.M."/>
            <person name="Celniker S.E."/>
        </authorList>
    </citation>
    <scope>NUCLEOTIDE SEQUENCE [LARGE SCALE MRNA]</scope>
    <source>
        <strain>Berkeley</strain>
        <tissue>Embryo</tissue>
    </source>
</reference>
<reference key="4">
    <citation type="journal article" date="2007" name="Mol. Biosyst.">
        <title>An integrated chemical, mass spectrometric and computational strategy for (quantitative) phosphoproteomics: application to Drosophila melanogaster Kc167 cells.</title>
        <authorList>
            <person name="Bodenmiller B."/>
            <person name="Mueller L.N."/>
            <person name="Pedrioli P.G.A."/>
            <person name="Pflieger D."/>
            <person name="Juenger M.A."/>
            <person name="Eng J.K."/>
            <person name="Aebersold R."/>
            <person name="Tao W.A."/>
        </authorList>
    </citation>
    <scope>PHOSPHORYLATION [LARGE SCALE ANALYSIS] AT SER-586</scope>
    <scope>IDENTIFICATION BY MASS SPECTROMETRY</scope>
</reference>
<reference key="5">
    <citation type="journal article" date="2019" name="Biol. Open">
        <title>The Drosophila protein, Nausicaa, regulates lamellipodial actin dynamics in a Cortactin-dependent manner.</title>
        <authorList>
            <person name="O'Connell M.E."/>
            <person name="Sridharan D."/>
            <person name="Driscoll T."/>
            <person name="Krishnamurthy I."/>
            <person name="Perry W.G."/>
            <person name="Applewhite D.A."/>
        </authorList>
    </citation>
    <scope>FUNCTION</scope>
    <scope>SUBCELLULAR LOCATION</scope>
    <scope>MUTAGENESIS OF 564-PRO--PRO-568</scope>
</reference>
<evidence type="ECO:0000250" key="1">
    <source>
        <dbReference type="UniProtKB" id="Q9P2B4"/>
    </source>
</evidence>
<evidence type="ECO:0000255" key="2"/>
<evidence type="ECO:0000256" key="3">
    <source>
        <dbReference type="SAM" id="MobiDB-lite"/>
    </source>
</evidence>
<evidence type="ECO:0000269" key="4">
    <source>
    </source>
</evidence>
<evidence type="ECO:0000269" key="5">
    <source>
    </source>
</evidence>
<evidence type="ECO:0000303" key="6">
    <source>
    </source>
</evidence>
<evidence type="ECO:0000305" key="7"/>
<evidence type="ECO:0000312" key="8">
    <source>
        <dbReference type="FlyBase" id="FBgn0034308"/>
    </source>
</evidence>
<comment type="function">
    <text evidence="1 5">Regulates lamellipodial actin dynamics in a Cortactin-dependent manner and is therefore likely involved in controlling actin branch density, actin-retrograde flow rates and lamellipodial protrusion. Functions by slowing the dissociation of Cortactin from Arp2/3 nucleated branches thereby increasing branch nucleation and junction stability (PubMed:31164339). Associates with core striatin-interacting phosphatase and kinase (STRIPAK) complex to form CTTNBP2NL-STRIPAK complexes. STRIPAK complexes have critical roles in protein (de)phosphorylation and are regulators of multiple signaling pathways including Hippo, MAPK, nuclear receptor and cytoskeleton remodeling. Different types of STRIPAK complexes are involved in a variety of biological processes such as cell growth, differentiation, apoptosis, metabolism and immune regulation (By similarity).</text>
</comment>
<comment type="subcellular location">
    <subcellularLocation>
        <location evidence="5">Cell projection</location>
        <location evidence="5">Lamellipodium</location>
    </subcellularLocation>
    <subcellularLocation>
        <location evidence="5">Cytoplasm</location>
        <location evidence="5">Cytoskeleton</location>
        <location evidence="5">Stress fiber</location>
    </subcellularLocation>
    <text evidence="5">Localization to the lamellipodia is dependent on Cortactin.</text>
</comment>
<comment type="miscellaneous">
    <text evidence="6">Named 'Nausicaa' after the princess in Homer's 'The Odyssey' who helps to ensure Odysseus' safe passage home from Phaeacia.</text>
</comment>
<feature type="chain" id="PRO_0000372638" description="CTTNBP2 N-terminal-like protein">
    <location>
        <begin position="1"/>
        <end position="609"/>
    </location>
</feature>
<feature type="region of interest" description="Disordered" evidence="3">
    <location>
        <begin position="1"/>
        <end position="29"/>
    </location>
</feature>
<feature type="region of interest" description="Disordered" evidence="3">
    <location>
        <begin position="556"/>
        <end position="584"/>
    </location>
</feature>
<feature type="coiled-coil region" evidence="2">
    <location>
        <begin position="182"/>
        <end position="264"/>
    </location>
</feature>
<feature type="coiled-coil region" evidence="2">
    <location>
        <begin position="303"/>
        <end position="370"/>
    </location>
</feature>
<feature type="compositionally biased region" description="Polar residues" evidence="3">
    <location>
        <begin position="1"/>
        <end position="10"/>
    </location>
</feature>
<feature type="compositionally biased region" description="Pro residues" evidence="3">
    <location>
        <begin position="563"/>
        <end position="574"/>
    </location>
</feature>
<feature type="modified residue" description="Phosphoserine" evidence="4">
    <location>
        <position position="586"/>
    </location>
</feature>
<feature type="mutagenesis site" description="Reduced localization to the lamellipodia, likely resulting from decreased interaction with Cortactin." evidence="5">
    <original>PPPIP</original>
    <variation>AAAIA</variation>
    <location>
        <begin position="564"/>
        <end position="568"/>
    </location>
</feature>
<sequence length="609" mass="65422">MEQNSNSSVADTFAEAPATDADYGTENCSGSGMSVGDTVSANHEFQTMKPGPGVVHKVMPVANSASSATATNGRTRSEMPHSELVKMLYYLEGELQARDVCIAALRNERVKQLIAQLRTKRLQPNDPYAAIFRDKIALNGNLISRESSTQAAQAEMEVRQIIEQQMEQQYQMVSKQRATHVRMVNILTESLENNQRMLQELEEEKRKHENTTAQGDDITYGLELERNKLKQDLEEERAQVAKMEKDLKKLQETLEYERNRQKQIVLLLIAERKKILMKYIEEGKRSEDLAQILAEEKQRSDTIAEGLEEESKKSLRMEEELEKQTHAMEQERKVLFAKLAKEELRVKELEQELNALRSEHEALKKQQQLGGSGSSVAAAKARQFSDDACATPPMVNIAKIVQPTATVSSMPVSGPQTGIARSIAPGQNIRSAGIATAPTGTATAAIAPLTAVLNHTTTITTTTNNTTTSSNSNSSGSIGVAATAAAVAASVETAATVTVPMVAPPSPSPAKMQPTATIQRAPGGKYAALAAAAALDQTTTPHPHPVPIAVPPVTVPPAGARGAPPPIPTKPIVPPKREPSLSRLGSITGSSAIAAATAATTAAGTAKQN</sequence>
<protein>
    <recommendedName>
        <fullName evidence="7">CTTNBP2 N-terminal-like protein</fullName>
    </recommendedName>
    <alternativeName>
        <fullName evidence="6">Protein Nausicaa</fullName>
    </alternativeName>
</protein>
<proteinExistence type="evidence at protein level"/>
<keyword id="KW-0966">Cell projection</keyword>
<keyword id="KW-0175">Coiled coil</keyword>
<keyword id="KW-0963">Cytoplasm</keyword>
<keyword id="KW-0206">Cytoskeleton</keyword>
<keyword id="KW-0597">Phosphoprotein</keyword>
<keyword id="KW-1185">Reference proteome</keyword>
<dbReference type="EMBL" id="AE013599">
    <property type="protein sequence ID" value="AAF57737.2"/>
    <property type="molecule type" value="Genomic_DNA"/>
</dbReference>
<dbReference type="EMBL" id="AE013599">
    <property type="protein sequence ID" value="AHN56360.1"/>
    <property type="molecule type" value="Genomic_DNA"/>
</dbReference>
<dbReference type="EMBL" id="AY094820">
    <property type="protein sequence ID" value="AAM11173.1"/>
    <property type="molecule type" value="mRNA"/>
</dbReference>
<dbReference type="RefSeq" id="NP_001286565.1">
    <property type="nucleotide sequence ID" value="NM_001299636.1"/>
</dbReference>
<dbReference type="RefSeq" id="NP_611299.2">
    <property type="nucleotide sequence ID" value="NM_137455.5"/>
</dbReference>
<dbReference type="SMR" id="Q8SX68"/>
<dbReference type="BioGRID" id="62758">
    <property type="interactions" value="3"/>
</dbReference>
<dbReference type="ComplexPortal" id="CPX-2237">
    <property type="entry name" value="STRIPAK complex"/>
</dbReference>
<dbReference type="FunCoup" id="Q8SX68">
    <property type="interactions" value="14"/>
</dbReference>
<dbReference type="IntAct" id="Q8SX68">
    <property type="interactions" value="2"/>
</dbReference>
<dbReference type="STRING" id="7227.FBpp0311543"/>
<dbReference type="iPTMnet" id="Q8SX68"/>
<dbReference type="PaxDb" id="7227-FBpp0085925"/>
<dbReference type="DNASU" id="37076"/>
<dbReference type="EnsemblMetazoa" id="FBtr0086746">
    <property type="protein sequence ID" value="FBpp0085925"/>
    <property type="gene ID" value="FBgn0034308"/>
</dbReference>
<dbReference type="EnsemblMetazoa" id="FBtr0345416">
    <property type="protein sequence ID" value="FBpp0311543"/>
    <property type="gene ID" value="FBgn0034308"/>
</dbReference>
<dbReference type="GeneID" id="37076"/>
<dbReference type="KEGG" id="dme:Dmel_CG10915"/>
<dbReference type="UCSC" id="CG10915-RA">
    <property type="organism name" value="d. melanogaster"/>
</dbReference>
<dbReference type="AGR" id="FB:FBgn0034308"/>
<dbReference type="CTD" id="37076"/>
<dbReference type="FlyBase" id="FBgn0034308">
    <property type="gene designation" value="Naus"/>
</dbReference>
<dbReference type="VEuPathDB" id="VectorBase:FBgn0034308"/>
<dbReference type="eggNOG" id="KOG1103">
    <property type="taxonomic scope" value="Eukaryota"/>
</dbReference>
<dbReference type="GeneTree" id="ENSGT00950000182852"/>
<dbReference type="HOGENOM" id="CLU_019330_0_0_1"/>
<dbReference type="InParanoid" id="Q8SX68"/>
<dbReference type="OMA" id="CATPMVN"/>
<dbReference type="OrthoDB" id="6021133at2759"/>
<dbReference type="PhylomeDB" id="Q8SX68"/>
<dbReference type="Reactome" id="R-DME-9013405">
    <property type="pathway name" value="RHOD GTPase cycle"/>
</dbReference>
<dbReference type="BioGRID-ORCS" id="37076">
    <property type="hits" value="0 hits in 3 CRISPR screens"/>
</dbReference>
<dbReference type="GenomeRNAi" id="37076"/>
<dbReference type="PRO" id="PR:Q8SX68"/>
<dbReference type="Proteomes" id="UP000000803">
    <property type="component" value="Chromosome 2R"/>
</dbReference>
<dbReference type="Bgee" id="FBgn0034308">
    <property type="expression patterns" value="Expressed in outer photoreceptor cell (Drosophila) in insect head and 182 other cell types or tissues"/>
</dbReference>
<dbReference type="GO" id="GO:0015629">
    <property type="term" value="C:actin cytoskeleton"/>
    <property type="evidence" value="ECO:0000318"/>
    <property type="project" value="GO_Central"/>
</dbReference>
<dbReference type="GO" id="GO:0005737">
    <property type="term" value="C:cytoplasm"/>
    <property type="evidence" value="ECO:0007669"/>
    <property type="project" value="UniProtKB-KW"/>
</dbReference>
<dbReference type="GO" id="GO:0090443">
    <property type="term" value="C:FAR/SIN/STRIPAK complex"/>
    <property type="evidence" value="ECO:0000314"/>
    <property type="project" value="FlyBase"/>
</dbReference>
<dbReference type="GO" id="GO:0030027">
    <property type="term" value="C:lamellipodium"/>
    <property type="evidence" value="ECO:0000314"/>
    <property type="project" value="UniProtKB"/>
</dbReference>
<dbReference type="GO" id="GO:0001725">
    <property type="term" value="C:stress fiber"/>
    <property type="evidence" value="ECO:0000314"/>
    <property type="project" value="UniProtKB"/>
</dbReference>
<dbReference type="GO" id="GO:0061573">
    <property type="term" value="P:actin filament bundle retrograde transport"/>
    <property type="evidence" value="ECO:0000315"/>
    <property type="project" value="UniProtKB"/>
</dbReference>
<dbReference type="GO" id="GO:2000601">
    <property type="term" value="P:positive regulation of Arp2/3 complex-mediated actin nucleation"/>
    <property type="evidence" value="ECO:0000315"/>
    <property type="project" value="UniProtKB"/>
</dbReference>
<dbReference type="GO" id="GO:2000394">
    <property type="term" value="P:positive regulation of lamellipodium morphogenesis"/>
    <property type="evidence" value="ECO:0000315"/>
    <property type="project" value="UniProtKB"/>
</dbReference>
<dbReference type="GO" id="GO:0150012">
    <property type="term" value="P:positive regulation of neuron projection arborization"/>
    <property type="evidence" value="ECO:0000315"/>
    <property type="project" value="UniProtKB"/>
</dbReference>
<dbReference type="GO" id="GO:1903119">
    <property type="term" value="P:protein localization to actin cytoskeleton"/>
    <property type="evidence" value="ECO:0000315"/>
    <property type="project" value="UniProtKB"/>
</dbReference>
<dbReference type="InterPro" id="IPR050719">
    <property type="entry name" value="Cortactin-Actin_Reg"/>
</dbReference>
<dbReference type="InterPro" id="IPR019131">
    <property type="entry name" value="Cortactin-binding_p2_N"/>
</dbReference>
<dbReference type="PANTHER" id="PTHR23166:SF5">
    <property type="entry name" value="CTTNBP2 N-TERMINAL-LIKE PROTEIN"/>
    <property type="match status" value="1"/>
</dbReference>
<dbReference type="PANTHER" id="PTHR23166">
    <property type="entry name" value="FILAMIN/GPBP-INTERACTING PROTEIN"/>
    <property type="match status" value="1"/>
</dbReference>
<dbReference type="Pfam" id="PF09727">
    <property type="entry name" value="CortBP2"/>
    <property type="match status" value="1"/>
</dbReference>
<name>CT2NL_DROME</name>
<organism>
    <name type="scientific">Drosophila melanogaster</name>
    <name type="common">Fruit fly</name>
    <dbReference type="NCBI Taxonomy" id="7227"/>
    <lineage>
        <taxon>Eukaryota</taxon>
        <taxon>Metazoa</taxon>
        <taxon>Ecdysozoa</taxon>
        <taxon>Arthropoda</taxon>
        <taxon>Hexapoda</taxon>
        <taxon>Insecta</taxon>
        <taxon>Pterygota</taxon>
        <taxon>Neoptera</taxon>
        <taxon>Endopterygota</taxon>
        <taxon>Diptera</taxon>
        <taxon>Brachycera</taxon>
        <taxon>Muscomorpha</taxon>
        <taxon>Ephydroidea</taxon>
        <taxon>Drosophilidae</taxon>
        <taxon>Drosophila</taxon>
        <taxon>Sophophora</taxon>
    </lineage>
</organism>
<gene>
    <name evidence="6 8" type="primary">Naus</name>
    <name evidence="8" type="ORF">CG10915</name>
</gene>